<keyword id="KW-0479">Metal-binding</keyword>
<keyword id="KW-0533">Nickel</keyword>
<keyword id="KW-0862">Zinc</keyword>
<gene>
    <name evidence="1" type="primary">hypA</name>
    <name type="ordered locus">DMR_21930</name>
</gene>
<sequence>MHELSIAQSLLALIEDEMAKHGKEKLITVKVRHGRLSSVVPEALSMAFEVMTADSRLAGAALVMEETPVLLRCRDCSREFTPDPPTAAFAPCPGCGQELGHTVVSGRELYIEYLELE</sequence>
<organism>
    <name type="scientific">Solidesulfovibrio magneticus (strain ATCC 700980 / DSM 13731 / RS-1)</name>
    <name type="common">Desulfovibrio magneticus</name>
    <dbReference type="NCBI Taxonomy" id="573370"/>
    <lineage>
        <taxon>Bacteria</taxon>
        <taxon>Pseudomonadati</taxon>
        <taxon>Thermodesulfobacteriota</taxon>
        <taxon>Desulfovibrionia</taxon>
        <taxon>Desulfovibrionales</taxon>
        <taxon>Desulfovibrionaceae</taxon>
        <taxon>Solidesulfovibrio</taxon>
    </lineage>
</organism>
<proteinExistence type="inferred from homology"/>
<dbReference type="EMBL" id="AP010904">
    <property type="protein sequence ID" value="BAH75684.1"/>
    <property type="molecule type" value="Genomic_DNA"/>
</dbReference>
<dbReference type="RefSeq" id="WP_015860867.1">
    <property type="nucleotide sequence ID" value="NC_012796.1"/>
</dbReference>
<dbReference type="SMR" id="C4XS28"/>
<dbReference type="STRING" id="573370.DMR_21930"/>
<dbReference type="KEGG" id="dma:DMR_21930"/>
<dbReference type="eggNOG" id="COG0375">
    <property type="taxonomic scope" value="Bacteria"/>
</dbReference>
<dbReference type="HOGENOM" id="CLU_126929_4_1_7"/>
<dbReference type="OrthoDB" id="9800361at2"/>
<dbReference type="Proteomes" id="UP000009071">
    <property type="component" value="Chromosome"/>
</dbReference>
<dbReference type="GO" id="GO:0016151">
    <property type="term" value="F:nickel cation binding"/>
    <property type="evidence" value="ECO:0007669"/>
    <property type="project" value="UniProtKB-UniRule"/>
</dbReference>
<dbReference type="GO" id="GO:0008270">
    <property type="term" value="F:zinc ion binding"/>
    <property type="evidence" value="ECO:0007669"/>
    <property type="project" value="UniProtKB-UniRule"/>
</dbReference>
<dbReference type="GO" id="GO:0051604">
    <property type="term" value="P:protein maturation"/>
    <property type="evidence" value="ECO:0007669"/>
    <property type="project" value="InterPro"/>
</dbReference>
<dbReference type="GO" id="GO:0036211">
    <property type="term" value="P:protein modification process"/>
    <property type="evidence" value="ECO:0007669"/>
    <property type="project" value="UniProtKB-UniRule"/>
</dbReference>
<dbReference type="Gene3D" id="3.30.2320.80">
    <property type="match status" value="1"/>
</dbReference>
<dbReference type="HAMAP" id="MF_00213">
    <property type="entry name" value="HypA_HybF"/>
    <property type="match status" value="1"/>
</dbReference>
<dbReference type="InterPro" id="IPR020538">
    <property type="entry name" value="Hydgase_Ni_incorp_HypA/HybF_CS"/>
</dbReference>
<dbReference type="InterPro" id="IPR000688">
    <property type="entry name" value="HypA/HybF"/>
</dbReference>
<dbReference type="PANTHER" id="PTHR34535">
    <property type="entry name" value="HYDROGENASE MATURATION FACTOR HYPA"/>
    <property type="match status" value="1"/>
</dbReference>
<dbReference type="PANTHER" id="PTHR34535:SF3">
    <property type="entry name" value="HYDROGENASE MATURATION FACTOR HYPA"/>
    <property type="match status" value="1"/>
</dbReference>
<dbReference type="Pfam" id="PF01155">
    <property type="entry name" value="HypA"/>
    <property type="match status" value="1"/>
</dbReference>
<dbReference type="PIRSF" id="PIRSF004761">
    <property type="entry name" value="Hydrgn_mat_HypA"/>
    <property type="match status" value="1"/>
</dbReference>
<dbReference type="PROSITE" id="PS01249">
    <property type="entry name" value="HYPA"/>
    <property type="match status" value="1"/>
</dbReference>
<accession>C4XS28</accession>
<feature type="chain" id="PRO_1000204205" description="Hydrogenase maturation factor HypA">
    <location>
        <begin position="1"/>
        <end position="117"/>
    </location>
</feature>
<feature type="binding site" evidence="1">
    <location>
        <position position="2"/>
    </location>
    <ligand>
        <name>Ni(2+)</name>
        <dbReference type="ChEBI" id="CHEBI:49786"/>
    </ligand>
</feature>
<feature type="binding site" evidence="1">
    <location>
        <position position="73"/>
    </location>
    <ligand>
        <name>Zn(2+)</name>
        <dbReference type="ChEBI" id="CHEBI:29105"/>
    </ligand>
</feature>
<feature type="binding site" evidence="1">
    <location>
        <position position="76"/>
    </location>
    <ligand>
        <name>Zn(2+)</name>
        <dbReference type="ChEBI" id="CHEBI:29105"/>
    </ligand>
</feature>
<feature type="binding site" evidence="1">
    <location>
        <position position="92"/>
    </location>
    <ligand>
        <name>Zn(2+)</name>
        <dbReference type="ChEBI" id="CHEBI:29105"/>
    </ligand>
</feature>
<feature type="binding site" evidence="1">
    <location>
        <position position="95"/>
    </location>
    <ligand>
        <name>Zn(2+)</name>
        <dbReference type="ChEBI" id="CHEBI:29105"/>
    </ligand>
</feature>
<evidence type="ECO:0000255" key="1">
    <source>
        <dbReference type="HAMAP-Rule" id="MF_00213"/>
    </source>
</evidence>
<protein>
    <recommendedName>
        <fullName evidence="1">Hydrogenase maturation factor HypA</fullName>
    </recommendedName>
</protein>
<reference key="1">
    <citation type="journal article" date="2009" name="Genome Res.">
        <title>Whole genome sequence of Desulfovibrio magneticus strain RS-1 revealed common gene clusters in magnetotactic bacteria.</title>
        <authorList>
            <person name="Nakazawa H."/>
            <person name="Arakaki A."/>
            <person name="Narita-Yamada S."/>
            <person name="Yashiro I."/>
            <person name="Jinno K."/>
            <person name="Aoki N."/>
            <person name="Tsuruyama A."/>
            <person name="Okamura Y."/>
            <person name="Tanikawa S."/>
            <person name="Fujita N."/>
            <person name="Takeyama H."/>
            <person name="Matsunaga T."/>
        </authorList>
    </citation>
    <scope>NUCLEOTIDE SEQUENCE [LARGE SCALE GENOMIC DNA]</scope>
    <source>
        <strain>ATCC 700980 / DSM 13731 / RS-1</strain>
    </source>
</reference>
<comment type="function">
    <text evidence="1">Involved in the maturation of [NiFe] hydrogenases. Required for nickel insertion into the metal center of the hydrogenase.</text>
</comment>
<comment type="similarity">
    <text evidence="1">Belongs to the HypA/HybF family.</text>
</comment>
<name>HYPA_SOLM1</name>